<keyword id="KW-0028">Amino-acid biosynthesis</keyword>
<keyword id="KW-0963">Cytoplasm</keyword>
<keyword id="KW-0220">Diaminopimelate biosynthesis</keyword>
<keyword id="KW-0457">Lysine biosynthesis</keyword>
<keyword id="KW-0520">NAD</keyword>
<keyword id="KW-0521">NADP</keyword>
<keyword id="KW-0560">Oxidoreductase</keyword>
<gene>
    <name evidence="1" type="primary">dapB</name>
    <name type="ordered locus">PputW619_0707</name>
</gene>
<organism>
    <name type="scientific">Pseudomonas putida (strain W619)</name>
    <dbReference type="NCBI Taxonomy" id="390235"/>
    <lineage>
        <taxon>Bacteria</taxon>
        <taxon>Pseudomonadati</taxon>
        <taxon>Pseudomonadota</taxon>
        <taxon>Gammaproteobacteria</taxon>
        <taxon>Pseudomonadales</taxon>
        <taxon>Pseudomonadaceae</taxon>
        <taxon>Pseudomonas</taxon>
    </lineage>
</organism>
<comment type="function">
    <text evidence="1">Catalyzes the conversion of 4-hydroxy-tetrahydrodipicolinate (HTPA) to tetrahydrodipicolinate.</text>
</comment>
<comment type="catalytic activity">
    <reaction evidence="1">
        <text>(S)-2,3,4,5-tetrahydrodipicolinate + NAD(+) + H2O = (2S,4S)-4-hydroxy-2,3,4,5-tetrahydrodipicolinate + NADH + H(+)</text>
        <dbReference type="Rhea" id="RHEA:35323"/>
        <dbReference type="ChEBI" id="CHEBI:15377"/>
        <dbReference type="ChEBI" id="CHEBI:15378"/>
        <dbReference type="ChEBI" id="CHEBI:16845"/>
        <dbReference type="ChEBI" id="CHEBI:57540"/>
        <dbReference type="ChEBI" id="CHEBI:57945"/>
        <dbReference type="ChEBI" id="CHEBI:67139"/>
        <dbReference type="EC" id="1.17.1.8"/>
    </reaction>
</comment>
<comment type="catalytic activity">
    <reaction evidence="1">
        <text>(S)-2,3,4,5-tetrahydrodipicolinate + NADP(+) + H2O = (2S,4S)-4-hydroxy-2,3,4,5-tetrahydrodipicolinate + NADPH + H(+)</text>
        <dbReference type="Rhea" id="RHEA:35331"/>
        <dbReference type="ChEBI" id="CHEBI:15377"/>
        <dbReference type="ChEBI" id="CHEBI:15378"/>
        <dbReference type="ChEBI" id="CHEBI:16845"/>
        <dbReference type="ChEBI" id="CHEBI:57783"/>
        <dbReference type="ChEBI" id="CHEBI:58349"/>
        <dbReference type="ChEBI" id="CHEBI:67139"/>
        <dbReference type="EC" id="1.17.1.8"/>
    </reaction>
</comment>
<comment type="pathway">
    <text evidence="1">Amino-acid biosynthesis; L-lysine biosynthesis via DAP pathway; (S)-tetrahydrodipicolinate from L-aspartate: step 4/4.</text>
</comment>
<comment type="subcellular location">
    <subcellularLocation>
        <location evidence="1">Cytoplasm</location>
    </subcellularLocation>
</comment>
<comment type="similarity">
    <text evidence="1">Belongs to the DapB family.</text>
</comment>
<comment type="caution">
    <text evidence="2">Was originally thought to be a dihydrodipicolinate reductase (DHDPR), catalyzing the conversion of dihydrodipicolinate to tetrahydrodipicolinate. However, it was shown in E.coli that the substrate of the enzymatic reaction is not dihydrodipicolinate (DHDP) but in fact (2S,4S)-4-hydroxy-2,3,4,5-tetrahydrodipicolinic acid (HTPA), the product released by the DapA-catalyzed reaction.</text>
</comment>
<reference key="1">
    <citation type="submission" date="2008-02" db="EMBL/GenBank/DDBJ databases">
        <title>Complete sequence of Pseudomonas putida W619.</title>
        <authorList>
            <person name="Copeland A."/>
            <person name="Lucas S."/>
            <person name="Lapidus A."/>
            <person name="Barry K."/>
            <person name="Detter J.C."/>
            <person name="Glavina del Rio T."/>
            <person name="Dalin E."/>
            <person name="Tice H."/>
            <person name="Pitluck S."/>
            <person name="Chain P."/>
            <person name="Malfatti S."/>
            <person name="Shin M."/>
            <person name="Vergez L."/>
            <person name="Schmutz J."/>
            <person name="Larimer F."/>
            <person name="Land M."/>
            <person name="Hauser L."/>
            <person name="Kyrpides N."/>
            <person name="Kim E."/>
            <person name="Taghavi S."/>
            <person name="Vangronsveld D."/>
            <person name="van der Lelie D."/>
            <person name="Richardson P."/>
        </authorList>
    </citation>
    <scope>NUCLEOTIDE SEQUENCE [LARGE SCALE GENOMIC DNA]</scope>
    <source>
        <strain>W619</strain>
    </source>
</reference>
<sequence>MRRIAVMGAAGRMGKTLIEAVQQTQGAGLTAAIDRPDSSLVGADAGELAALGRIGVLLSDDLAKVADDFDVLIDFTHPSVTLKNLAFCRKHGKAMIIGTTGFTSEEKQLLAEAGKDIPIVFAANFSVGVNLSLKLLDMAARVLGDDVDIEIIEAHHRHKVDAPSGTALRMGEVVANALGRDLQEVAVYGREGQTGARDRQTIGFATVRAGDVVGDHTVLFAAEGERLEITHKASSRMTFAKGAVRAALWLDGREAGLYDMQDVLELR</sequence>
<accession>B1J256</accession>
<feature type="chain" id="PRO_1000093991" description="4-hydroxy-tetrahydrodipicolinate reductase">
    <location>
        <begin position="1"/>
        <end position="267"/>
    </location>
</feature>
<feature type="active site" description="Proton donor/acceptor" evidence="1">
    <location>
        <position position="155"/>
    </location>
</feature>
<feature type="active site" description="Proton donor" evidence="1">
    <location>
        <position position="159"/>
    </location>
</feature>
<feature type="binding site" evidence="1">
    <location>
        <begin position="8"/>
        <end position="13"/>
    </location>
    <ligand>
        <name>NAD(+)</name>
        <dbReference type="ChEBI" id="CHEBI:57540"/>
    </ligand>
</feature>
<feature type="binding site" evidence="1">
    <location>
        <position position="34"/>
    </location>
    <ligand>
        <name>NAD(+)</name>
        <dbReference type="ChEBI" id="CHEBI:57540"/>
    </ligand>
</feature>
<feature type="binding site" evidence="1">
    <location>
        <position position="35"/>
    </location>
    <ligand>
        <name>NADP(+)</name>
        <dbReference type="ChEBI" id="CHEBI:58349"/>
    </ligand>
</feature>
<feature type="binding site" evidence="1">
    <location>
        <begin position="98"/>
        <end position="100"/>
    </location>
    <ligand>
        <name>NAD(+)</name>
        <dbReference type="ChEBI" id="CHEBI:57540"/>
    </ligand>
</feature>
<feature type="binding site" evidence="1">
    <location>
        <begin position="122"/>
        <end position="125"/>
    </location>
    <ligand>
        <name>NAD(+)</name>
        <dbReference type="ChEBI" id="CHEBI:57540"/>
    </ligand>
</feature>
<feature type="binding site" evidence="1">
    <location>
        <position position="156"/>
    </location>
    <ligand>
        <name>(S)-2,3,4,5-tetrahydrodipicolinate</name>
        <dbReference type="ChEBI" id="CHEBI:16845"/>
    </ligand>
</feature>
<feature type="binding site" evidence="1">
    <location>
        <begin position="165"/>
        <end position="166"/>
    </location>
    <ligand>
        <name>(S)-2,3,4,5-tetrahydrodipicolinate</name>
        <dbReference type="ChEBI" id="CHEBI:16845"/>
    </ligand>
</feature>
<protein>
    <recommendedName>
        <fullName evidence="1">4-hydroxy-tetrahydrodipicolinate reductase</fullName>
        <shortName evidence="1">HTPA reductase</shortName>
        <ecNumber evidence="1">1.17.1.8</ecNumber>
    </recommendedName>
</protein>
<proteinExistence type="inferred from homology"/>
<evidence type="ECO:0000255" key="1">
    <source>
        <dbReference type="HAMAP-Rule" id="MF_00102"/>
    </source>
</evidence>
<evidence type="ECO:0000305" key="2"/>
<name>DAPB_PSEPW</name>
<dbReference type="EC" id="1.17.1.8" evidence="1"/>
<dbReference type="EMBL" id="CP000949">
    <property type="protein sequence ID" value="ACA71212.1"/>
    <property type="molecule type" value="Genomic_DNA"/>
</dbReference>
<dbReference type="SMR" id="B1J256"/>
<dbReference type="STRING" id="390235.PputW619_0707"/>
<dbReference type="KEGG" id="ppw:PputW619_0707"/>
<dbReference type="eggNOG" id="COG0289">
    <property type="taxonomic scope" value="Bacteria"/>
</dbReference>
<dbReference type="HOGENOM" id="CLU_047479_2_1_6"/>
<dbReference type="OrthoDB" id="9790352at2"/>
<dbReference type="UniPathway" id="UPA00034">
    <property type="reaction ID" value="UER00018"/>
</dbReference>
<dbReference type="GO" id="GO:0005829">
    <property type="term" value="C:cytosol"/>
    <property type="evidence" value="ECO:0007669"/>
    <property type="project" value="TreeGrafter"/>
</dbReference>
<dbReference type="GO" id="GO:0008839">
    <property type="term" value="F:4-hydroxy-tetrahydrodipicolinate reductase"/>
    <property type="evidence" value="ECO:0007669"/>
    <property type="project" value="UniProtKB-EC"/>
</dbReference>
<dbReference type="GO" id="GO:0051287">
    <property type="term" value="F:NAD binding"/>
    <property type="evidence" value="ECO:0007669"/>
    <property type="project" value="UniProtKB-UniRule"/>
</dbReference>
<dbReference type="GO" id="GO:0050661">
    <property type="term" value="F:NADP binding"/>
    <property type="evidence" value="ECO:0007669"/>
    <property type="project" value="UniProtKB-UniRule"/>
</dbReference>
<dbReference type="GO" id="GO:0016726">
    <property type="term" value="F:oxidoreductase activity, acting on CH or CH2 groups, NAD or NADP as acceptor"/>
    <property type="evidence" value="ECO:0007669"/>
    <property type="project" value="UniProtKB-UniRule"/>
</dbReference>
<dbReference type="GO" id="GO:0019877">
    <property type="term" value="P:diaminopimelate biosynthetic process"/>
    <property type="evidence" value="ECO:0007669"/>
    <property type="project" value="UniProtKB-UniRule"/>
</dbReference>
<dbReference type="GO" id="GO:0009089">
    <property type="term" value="P:lysine biosynthetic process via diaminopimelate"/>
    <property type="evidence" value="ECO:0007669"/>
    <property type="project" value="UniProtKB-UniRule"/>
</dbReference>
<dbReference type="CDD" id="cd02274">
    <property type="entry name" value="DHDPR_N"/>
    <property type="match status" value="1"/>
</dbReference>
<dbReference type="FunFam" id="3.30.360.10:FF:000004">
    <property type="entry name" value="4-hydroxy-tetrahydrodipicolinate reductase"/>
    <property type="match status" value="1"/>
</dbReference>
<dbReference type="FunFam" id="3.40.50.720:FF:000048">
    <property type="entry name" value="4-hydroxy-tetrahydrodipicolinate reductase"/>
    <property type="match status" value="1"/>
</dbReference>
<dbReference type="Gene3D" id="3.30.360.10">
    <property type="entry name" value="Dihydrodipicolinate Reductase, domain 2"/>
    <property type="match status" value="1"/>
</dbReference>
<dbReference type="Gene3D" id="3.40.50.720">
    <property type="entry name" value="NAD(P)-binding Rossmann-like Domain"/>
    <property type="match status" value="1"/>
</dbReference>
<dbReference type="HAMAP" id="MF_00102">
    <property type="entry name" value="DapB"/>
    <property type="match status" value="1"/>
</dbReference>
<dbReference type="InterPro" id="IPR022663">
    <property type="entry name" value="DapB_C"/>
</dbReference>
<dbReference type="InterPro" id="IPR000846">
    <property type="entry name" value="DapB_N"/>
</dbReference>
<dbReference type="InterPro" id="IPR022664">
    <property type="entry name" value="DapB_N_CS"/>
</dbReference>
<dbReference type="InterPro" id="IPR023940">
    <property type="entry name" value="DHDPR_bac"/>
</dbReference>
<dbReference type="InterPro" id="IPR036291">
    <property type="entry name" value="NAD(P)-bd_dom_sf"/>
</dbReference>
<dbReference type="NCBIfam" id="TIGR00036">
    <property type="entry name" value="dapB"/>
    <property type="match status" value="1"/>
</dbReference>
<dbReference type="PANTHER" id="PTHR20836:SF0">
    <property type="entry name" value="4-HYDROXY-TETRAHYDRODIPICOLINATE REDUCTASE 1, CHLOROPLASTIC-RELATED"/>
    <property type="match status" value="1"/>
</dbReference>
<dbReference type="PANTHER" id="PTHR20836">
    <property type="entry name" value="DIHYDRODIPICOLINATE REDUCTASE"/>
    <property type="match status" value="1"/>
</dbReference>
<dbReference type="Pfam" id="PF05173">
    <property type="entry name" value="DapB_C"/>
    <property type="match status" value="1"/>
</dbReference>
<dbReference type="Pfam" id="PF01113">
    <property type="entry name" value="DapB_N"/>
    <property type="match status" value="1"/>
</dbReference>
<dbReference type="PIRSF" id="PIRSF000161">
    <property type="entry name" value="DHPR"/>
    <property type="match status" value="1"/>
</dbReference>
<dbReference type="SUPFAM" id="SSF55347">
    <property type="entry name" value="Glyceraldehyde-3-phosphate dehydrogenase-like, C-terminal domain"/>
    <property type="match status" value="1"/>
</dbReference>
<dbReference type="SUPFAM" id="SSF51735">
    <property type="entry name" value="NAD(P)-binding Rossmann-fold domains"/>
    <property type="match status" value="1"/>
</dbReference>
<dbReference type="PROSITE" id="PS01298">
    <property type="entry name" value="DAPB"/>
    <property type="match status" value="1"/>
</dbReference>